<protein>
    <recommendedName>
        <fullName>Phosphoribulokinase</fullName>
        <shortName>PRK</shortName>
        <shortName>PRKase</shortName>
        <ecNumber>2.7.1.19</ecNumber>
    </recommendedName>
    <alternativeName>
        <fullName>Phosphopentokinase</fullName>
    </alternativeName>
</protein>
<keyword id="KW-0067">ATP-binding</keyword>
<keyword id="KW-0113">Calvin cycle</keyword>
<keyword id="KW-0150">Chloroplast</keyword>
<keyword id="KW-0903">Direct protein sequencing</keyword>
<keyword id="KW-0418">Kinase</keyword>
<keyword id="KW-0547">Nucleotide-binding</keyword>
<keyword id="KW-0602">Photosynthesis</keyword>
<keyword id="KW-0934">Plastid</keyword>
<keyword id="KW-0808">Transferase</keyword>
<accession>P81664</accession>
<evidence type="ECO:0000250" key="1"/>
<evidence type="ECO:0000305" key="2"/>
<feature type="chain" id="PRO_0000201961" description="Phosphoribulokinase">
    <location>
        <begin position="1" status="less than"/>
        <end position="35" status="greater than"/>
    </location>
</feature>
<feature type="non-consecutive residues" evidence="2">
    <location>
        <begin position="12"/>
        <end position="13"/>
    </location>
</feature>
<feature type="non-consecutive residues" evidence="2">
    <location>
        <begin position="23"/>
        <end position="24"/>
    </location>
</feature>
<feature type="non-terminal residue">
    <location>
        <position position="1"/>
    </location>
</feature>
<feature type="non-terminal residue">
    <location>
        <position position="35"/>
    </location>
</feature>
<comment type="catalytic activity">
    <reaction>
        <text>D-ribulose 5-phosphate + ATP = D-ribulose 1,5-bisphosphate + ADP + H(+)</text>
        <dbReference type="Rhea" id="RHEA:19365"/>
        <dbReference type="ChEBI" id="CHEBI:15378"/>
        <dbReference type="ChEBI" id="CHEBI:30616"/>
        <dbReference type="ChEBI" id="CHEBI:57870"/>
        <dbReference type="ChEBI" id="CHEBI:58121"/>
        <dbReference type="ChEBI" id="CHEBI:456216"/>
        <dbReference type="EC" id="2.7.1.19"/>
    </reaction>
</comment>
<comment type="activity regulation">
    <text evidence="1">Light regulated via thioredoxin by reversible oxidation/reduction of sulfhydryl/disulfide groups.</text>
</comment>
<comment type="pathway">
    <text>Carbohydrate biosynthesis; Calvin cycle.</text>
</comment>
<comment type="subcellular location">
    <subcellularLocation>
        <location>Plastid</location>
        <location>Chloroplast</location>
    </subcellularLocation>
</comment>
<comment type="miscellaneous">
    <text>On the 2D-gel the determined pI of this protein (spot N148) is: 5.6, its MW is: 37 kDa.</text>
</comment>
<comment type="similarity">
    <text evidence="2">Belongs to the phosphoribulokinase family.</text>
</comment>
<dbReference type="EC" id="2.7.1.19"/>
<dbReference type="SMR" id="P81664"/>
<dbReference type="UniPathway" id="UPA00116"/>
<dbReference type="GO" id="GO:0009507">
    <property type="term" value="C:chloroplast"/>
    <property type="evidence" value="ECO:0007669"/>
    <property type="project" value="UniProtKB-SubCell"/>
</dbReference>
<dbReference type="GO" id="GO:0005524">
    <property type="term" value="F:ATP binding"/>
    <property type="evidence" value="ECO:0007669"/>
    <property type="project" value="UniProtKB-KW"/>
</dbReference>
<dbReference type="GO" id="GO:0008974">
    <property type="term" value="F:phosphoribulokinase activity"/>
    <property type="evidence" value="ECO:0007669"/>
    <property type="project" value="UniProtKB-EC"/>
</dbReference>
<dbReference type="GO" id="GO:0019253">
    <property type="term" value="P:reductive pentose-phosphate cycle"/>
    <property type="evidence" value="ECO:0007669"/>
    <property type="project" value="UniProtKB-UniPathway"/>
</dbReference>
<reference key="1">
    <citation type="journal article" date="1999" name="Electrophoresis">
        <title>Separation and characterization of needle and xylem maritime pine proteins.</title>
        <authorList>
            <person name="Costa P."/>
            <person name="Pionneau C."/>
            <person name="Bauw G."/>
            <person name="Dubos C."/>
            <person name="Bahrman N."/>
            <person name="Kremer A."/>
            <person name="Frigerio J.-M."/>
            <person name="Plomion C."/>
        </authorList>
    </citation>
    <scope>PROTEIN SEQUENCE</scope>
    <source>
        <tissue>Needle</tissue>
    </source>
</reference>
<proteinExistence type="evidence at protein level"/>
<organism>
    <name type="scientific">Pinus pinaster</name>
    <name type="common">Maritime pine</name>
    <dbReference type="NCBI Taxonomy" id="71647"/>
    <lineage>
        <taxon>Eukaryota</taxon>
        <taxon>Viridiplantae</taxon>
        <taxon>Streptophyta</taxon>
        <taxon>Embryophyta</taxon>
        <taxon>Tracheophyta</taxon>
        <taxon>Spermatophyta</taxon>
        <taxon>Pinopsida</taxon>
        <taxon>Pinidae</taxon>
        <taxon>Conifers I</taxon>
        <taxon>Pinales</taxon>
        <taxon>Pinaceae</taxon>
        <taxon>Pinus</taxon>
        <taxon>Pinus subgen. Pinus</taxon>
    </lineage>
</organism>
<sequence>ANNFDLMYEQVKFYGEVTQQMLKVSVLEMDGQFDR</sequence>
<name>KPPR_PINPS</name>